<protein>
    <recommendedName>
        <fullName>Complement C1q-like protein 3</fullName>
    </recommendedName>
    <alternativeName>
        <fullName>C1q and tumor necrosis factor-related protein 13</fullName>
        <shortName>C1q/TNF-related protein 13</shortName>
    </alternativeName>
</protein>
<gene>
    <name type="primary">C1QL3</name>
    <name type="synonym">CTRP13</name>
</gene>
<sequence length="255" mass="26719">MVLLLVILIPVLVSSAGTSAHYEMLGTCRMVCDPYGGTKAPSTAATPDRGLMQSLPTFIQGPKGEAGRPGKAGPRGPPGEPGPPGPMGPPGEKGEPGRQGLPGPPGAPGLNAAGAISAATYSTVPKIAFYAGLKRQHEGYEVLKFDDVVTNLGNHYDPTTGKFTCSIPGIYFFTYHVLMRGGDGTSMWADLCKNNQVRASAIAQDADQNYDYASNSVVLHLEPGDEVYIKLDGGKAHGGNNNKYSTFSGFIIYAD</sequence>
<reference key="1">
    <citation type="journal article" date="2004" name="Nature">
        <title>The DNA sequence and comparative analysis of human chromosome 10.</title>
        <authorList>
            <person name="Deloukas P."/>
            <person name="Earthrowl M.E."/>
            <person name="Grafham D.V."/>
            <person name="Rubenfield M."/>
            <person name="French L."/>
            <person name="Steward C.A."/>
            <person name="Sims S.K."/>
            <person name="Jones M.C."/>
            <person name="Searle S."/>
            <person name="Scott C."/>
            <person name="Howe K."/>
            <person name="Hunt S.E."/>
            <person name="Andrews T.D."/>
            <person name="Gilbert J.G.R."/>
            <person name="Swarbreck D."/>
            <person name="Ashurst J.L."/>
            <person name="Taylor A."/>
            <person name="Battles J."/>
            <person name="Bird C.P."/>
            <person name="Ainscough R."/>
            <person name="Almeida J.P."/>
            <person name="Ashwell R.I.S."/>
            <person name="Ambrose K.D."/>
            <person name="Babbage A.K."/>
            <person name="Bagguley C.L."/>
            <person name="Bailey J."/>
            <person name="Banerjee R."/>
            <person name="Bates K."/>
            <person name="Beasley H."/>
            <person name="Bray-Allen S."/>
            <person name="Brown A.J."/>
            <person name="Brown J.Y."/>
            <person name="Burford D.C."/>
            <person name="Burrill W."/>
            <person name="Burton J."/>
            <person name="Cahill P."/>
            <person name="Camire D."/>
            <person name="Carter N.P."/>
            <person name="Chapman J.C."/>
            <person name="Clark S.Y."/>
            <person name="Clarke G."/>
            <person name="Clee C.M."/>
            <person name="Clegg S."/>
            <person name="Corby N."/>
            <person name="Coulson A."/>
            <person name="Dhami P."/>
            <person name="Dutta I."/>
            <person name="Dunn M."/>
            <person name="Faulkner L."/>
            <person name="Frankish A."/>
            <person name="Frankland J.A."/>
            <person name="Garner P."/>
            <person name="Garnett J."/>
            <person name="Gribble S."/>
            <person name="Griffiths C."/>
            <person name="Grocock R."/>
            <person name="Gustafson E."/>
            <person name="Hammond S."/>
            <person name="Harley J.L."/>
            <person name="Hart E."/>
            <person name="Heath P.D."/>
            <person name="Ho T.P."/>
            <person name="Hopkins B."/>
            <person name="Horne J."/>
            <person name="Howden P.J."/>
            <person name="Huckle E."/>
            <person name="Hynds C."/>
            <person name="Johnson C."/>
            <person name="Johnson D."/>
            <person name="Kana A."/>
            <person name="Kay M."/>
            <person name="Kimberley A.M."/>
            <person name="Kershaw J.K."/>
            <person name="Kokkinaki M."/>
            <person name="Laird G.K."/>
            <person name="Lawlor S."/>
            <person name="Lee H.M."/>
            <person name="Leongamornlert D.A."/>
            <person name="Laird G."/>
            <person name="Lloyd C."/>
            <person name="Lloyd D.M."/>
            <person name="Loveland J."/>
            <person name="Lovell J."/>
            <person name="McLaren S."/>
            <person name="McLay K.E."/>
            <person name="McMurray A."/>
            <person name="Mashreghi-Mohammadi M."/>
            <person name="Matthews L."/>
            <person name="Milne S."/>
            <person name="Nickerson T."/>
            <person name="Nguyen M."/>
            <person name="Overton-Larty E."/>
            <person name="Palmer S.A."/>
            <person name="Pearce A.V."/>
            <person name="Peck A.I."/>
            <person name="Pelan S."/>
            <person name="Phillimore B."/>
            <person name="Porter K."/>
            <person name="Rice C.M."/>
            <person name="Rogosin A."/>
            <person name="Ross M.T."/>
            <person name="Sarafidou T."/>
            <person name="Sehra H.K."/>
            <person name="Shownkeen R."/>
            <person name="Skuce C.D."/>
            <person name="Smith M."/>
            <person name="Standring L."/>
            <person name="Sycamore N."/>
            <person name="Tester J."/>
            <person name="Thorpe A."/>
            <person name="Torcasso W."/>
            <person name="Tracey A."/>
            <person name="Tromans A."/>
            <person name="Tsolas J."/>
            <person name="Wall M."/>
            <person name="Walsh J."/>
            <person name="Wang H."/>
            <person name="Weinstock K."/>
            <person name="West A.P."/>
            <person name="Willey D.L."/>
            <person name="Whitehead S.L."/>
            <person name="Wilming L."/>
            <person name="Wray P.W."/>
            <person name="Young L."/>
            <person name="Chen Y."/>
            <person name="Lovering R.C."/>
            <person name="Moschonas N.K."/>
            <person name="Siebert R."/>
            <person name="Fechtel K."/>
            <person name="Bentley D."/>
            <person name="Durbin R.M."/>
            <person name="Hubbard T."/>
            <person name="Doucette-Stamm L."/>
            <person name="Beck S."/>
            <person name="Smith D.R."/>
            <person name="Rogers J."/>
        </authorList>
    </citation>
    <scope>NUCLEOTIDE SEQUENCE [LARGE SCALE GENOMIC DNA]</scope>
</reference>
<reference key="2">
    <citation type="journal article" date="2004" name="Genome Res.">
        <title>The status, quality, and expansion of the NIH full-length cDNA project: the Mammalian Gene Collection (MGC).</title>
        <authorList>
            <consortium name="The MGC Project Team"/>
        </authorList>
    </citation>
    <scope>NUCLEOTIDE SEQUENCE [LARGE SCALE MRNA] (ISOFORMS 2 AND 3)</scope>
</reference>
<reference key="3">
    <citation type="journal article" date="2011" name="J. Biol. Chem.">
        <title>Metabolic regulation by C1q/TNF-related protein-13 (CTRP13): activation OF AMP-activated protein kinase and suppression of fatty acid-induced JNK signaling.</title>
        <authorList>
            <person name="Wei Z."/>
            <person name="Peterson J.M."/>
            <person name="Wong G.W."/>
        </authorList>
    </citation>
    <scope>TISSUE SPECIFICITY</scope>
</reference>
<comment type="function">
    <text evidence="1">May regulate the number of excitatory synapses that are formed on hippocampus neurons. Has no effect on inhibitory synapses (By similarity). Plays a role in glucose homeostasis. Via AMPK signaling pathway, stimulates glucose uptake in adipocytes, myotubes and hepatocytes and enhances insulin-stimulated glucose uptake. In a hepatoma cell line, reduces the expression of gluconeogenic enzymes G6PC1 and PCK1 and hence decreases de novo glucose production (By similarity).</text>
</comment>
<comment type="subunit">
    <text evidence="1">Forms homooligomers. Interacts with ADGRB3. Interacts with C1QL2 and C1QL4, when proteins are coexpressed; this interaction does not occur after secretion.</text>
</comment>
<comment type="subcellular location">
    <subcellularLocation>
        <location evidence="1">Secreted</location>
    </subcellularLocation>
</comment>
<comment type="alternative products">
    <event type="alternative splicing"/>
    <isoform>
        <id>Q5VWW1-1</id>
        <name>1</name>
        <sequence type="displayed"/>
    </isoform>
    <isoform>
        <id>Q5VWW1-2</id>
        <name>2</name>
        <sequence type="described" ref="VSP_027130"/>
    </isoform>
    <isoform>
        <id>Q5VWW1-3</id>
        <name>3</name>
        <sequence type="described" ref="VSP_027130 VSP_027131"/>
    </isoform>
</comment>
<comment type="tissue specificity">
    <text evidence="5">Highly expressed in adipose tissue, with expression levels at least 2 orders of magnitude higher than in other tissues, including brain and kidney.</text>
</comment>
<organism>
    <name type="scientific">Homo sapiens</name>
    <name type="common">Human</name>
    <dbReference type="NCBI Taxonomy" id="9606"/>
    <lineage>
        <taxon>Eukaryota</taxon>
        <taxon>Metazoa</taxon>
        <taxon>Chordata</taxon>
        <taxon>Craniata</taxon>
        <taxon>Vertebrata</taxon>
        <taxon>Euteleostomi</taxon>
        <taxon>Mammalia</taxon>
        <taxon>Eutheria</taxon>
        <taxon>Euarchontoglires</taxon>
        <taxon>Primates</taxon>
        <taxon>Haplorrhini</taxon>
        <taxon>Catarrhini</taxon>
        <taxon>Hominidae</taxon>
        <taxon>Homo</taxon>
    </lineage>
</organism>
<proteinExistence type="evidence at protein level"/>
<keyword id="KW-0025">Alternative splicing</keyword>
<keyword id="KW-0176">Collagen</keyword>
<keyword id="KW-1267">Proteomics identification</keyword>
<keyword id="KW-1185">Reference proteome</keyword>
<keyword id="KW-0964">Secreted</keyword>
<keyword id="KW-0732">Signal</keyword>
<evidence type="ECO:0000250" key="1"/>
<evidence type="ECO:0000255" key="2"/>
<evidence type="ECO:0000255" key="3">
    <source>
        <dbReference type="PROSITE-ProRule" id="PRU00368"/>
    </source>
</evidence>
<evidence type="ECO:0000256" key="4">
    <source>
        <dbReference type="SAM" id="MobiDB-lite"/>
    </source>
</evidence>
<evidence type="ECO:0000269" key="5">
    <source>
    </source>
</evidence>
<evidence type="ECO:0000303" key="6">
    <source>
    </source>
</evidence>
<dbReference type="EMBL" id="AL353576">
    <property type="status" value="NOT_ANNOTATED_CDS"/>
    <property type="molecule type" value="Genomic_DNA"/>
</dbReference>
<dbReference type="EMBL" id="AL360230">
    <property type="status" value="NOT_ANNOTATED_CDS"/>
    <property type="molecule type" value="Genomic_DNA"/>
</dbReference>
<dbReference type="EMBL" id="BC127716">
    <property type="protein sequence ID" value="AAI27717.1"/>
    <property type="molecule type" value="mRNA"/>
</dbReference>
<dbReference type="EMBL" id="BC127717">
    <property type="protein sequence ID" value="AAI27718.1"/>
    <property type="molecule type" value="mRNA"/>
</dbReference>
<dbReference type="CCDS" id="CCDS31156.1">
    <molecule id="Q5VWW1-1"/>
</dbReference>
<dbReference type="RefSeq" id="NP_001010908.1">
    <molecule id="Q5VWW1-1"/>
    <property type="nucleotide sequence ID" value="NM_001010908.2"/>
</dbReference>
<dbReference type="SMR" id="Q5VWW1"/>
<dbReference type="BioGRID" id="133333">
    <property type="interactions" value="11"/>
</dbReference>
<dbReference type="FunCoup" id="Q5VWW1">
    <property type="interactions" value="18"/>
</dbReference>
<dbReference type="IntAct" id="Q5VWW1">
    <property type="interactions" value="5"/>
</dbReference>
<dbReference type="STRING" id="9606.ENSP00000298943"/>
<dbReference type="GlyGen" id="Q5VWW1">
    <property type="glycosylation" value="1 site, 1 O-linked glycan (1 site)"/>
</dbReference>
<dbReference type="iPTMnet" id="Q5VWW1"/>
<dbReference type="PhosphoSitePlus" id="Q5VWW1"/>
<dbReference type="BioMuta" id="C1QL3"/>
<dbReference type="DMDM" id="74747449"/>
<dbReference type="MassIVE" id="Q5VWW1"/>
<dbReference type="PaxDb" id="9606-ENSP00000298943"/>
<dbReference type="PeptideAtlas" id="Q5VWW1"/>
<dbReference type="ProteomicsDB" id="65563">
    <molecule id="Q5VWW1-1"/>
</dbReference>
<dbReference type="ProteomicsDB" id="65564">
    <molecule id="Q5VWW1-2"/>
</dbReference>
<dbReference type="ProteomicsDB" id="65565">
    <molecule id="Q5VWW1-3"/>
</dbReference>
<dbReference type="TopDownProteomics" id="Q5VWW1-3">
    <molecule id="Q5VWW1-3"/>
</dbReference>
<dbReference type="Antibodypedia" id="56786">
    <property type="antibodies" value="74 antibodies from 20 providers"/>
</dbReference>
<dbReference type="DNASU" id="389941"/>
<dbReference type="Ensembl" id="ENST00000298943.4">
    <molecule id="Q5VWW1-1"/>
    <property type="protein sequence ID" value="ENSP00000298943.3"/>
    <property type="gene ID" value="ENSG00000165985.12"/>
</dbReference>
<dbReference type="GeneID" id="389941"/>
<dbReference type="KEGG" id="hsa:389941"/>
<dbReference type="MANE-Select" id="ENST00000298943.4">
    <property type="protein sequence ID" value="ENSP00000298943.3"/>
    <property type="RefSeq nucleotide sequence ID" value="NM_001010908.2"/>
    <property type="RefSeq protein sequence ID" value="NP_001010908.1"/>
</dbReference>
<dbReference type="UCSC" id="uc001ioj.1">
    <molecule id="Q5VWW1-1"/>
    <property type="organism name" value="human"/>
</dbReference>
<dbReference type="AGR" id="HGNC:19359"/>
<dbReference type="CTD" id="389941"/>
<dbReference type="DisGeNET" id="389941"/>
<dbReference type="GeneCards" id="C1QL3"/>
<dbReference type="HGNC" id="HGNC:19359">
    <property type="gene designation" value="C1QL3"/>
</dbReference>
<dbReference type="HPA" id="ENSG00000165985">
    <property type="expression patterns" value="Group enriched (brain, retina)"/>
</dbReference>
<dbReference type="MIM" id="615227">
    <property type="type" value="gene"/>
</dbReference>
<dbReference type="neXtProt" id="NX_Q5VWW1"/>
<dbReference type="OpenTargets" id="ENSG00000165985"/>
<dbReference type="PharmGKB" id="PA134891919"/>
<dbReference type="VEuPathDB" id="HostDB:ENSG00000165985"/>
<dbReference type="eggNOG" id="ENOG502QSKV">
    <property type="taxonomic scope" value="Eukaryota"/>
</dbReference>
<dbReference type="GeneTree" id="ENSGT00940000161639"/>
<dbReference type="HOGENOM" id="CLU_001074_3_1_1"/>
<dbReference type="InParanoid" id="Q5VWW1"/>
<dbReference type="OMA" id="GYEMLKF"/>
<dbReference type="OrthoDB" id="10070467at2759"/>
<dbReference type="PAN-GO" id="Q5VWW1">
    <property type="GO annotations" value="1 GO annotation based on evolutionary models"/>
</dbReference>
<dbReference type="PhylomeDB" id="Q5VWW1"/>
<dbReference type="TreeFam" id="TF329591"/>
<dbReference type="PathwayCommons" id="Q5VWW1"/>
<dbReference type="SignaLink" id="Q5VWW1"/>
<dbReference type="BioGRID-ORCS" id="389941">
    <property type="hits" value="7 hits in 1139 CRISPR screens"/>
</dbReference>
<dbReference type="GenomeRNAi" id="389941"/>
<dbReference type="Pharos" id="Q5VWW1">
    <property type="development level" value="Tbio"/>
</dbReference>
<dbReference type="PRO" id="PR:Q5VWW1"/>
<dbReference type="Proteomes" id="UP000005640">
    <property type="component" value="Chromosome 10"/>
</dbReference>
<dbReference type="RNAct" id="Q5VWW1">
    <property type="molecule type" value="protein"/>
</dbReference>
<dbReference type="Bgee" id="ENSG00000165985">
    <property type="expression patterns" value="Expressed in superior frontal gyrus and 93 other cell types or tissues"/>
</dbReference>
<dbReference type="ExpressionAtlas" id="Q5VWW1">
    <property type="expression patterns" value="baseline and differential"/>
</dbReference>
<dbReference type="GO" id="GO:0005581">
    <property type="term" value="C:collagen trimer"/>
    <property type="evidence" value="ECO:0007669"/>
    <property type="project" value="UniProtKB-KW"/>
</dbReference>
<dbReference type="GO" id="GO:0098978">
    <property type="term" value="C:glutamatergic synapse"/>
    <property type="evidence" value="ECO:0007669"/>
    <property type="project" value="Ensembl"/>
</dbReference>
<dbReference type="GO" id="GO:0098686">
    <property type="term" value="C:hippocampal mossy fiber to CA3 synapse"/>
    <property type="evidence" value="ECO:0007669"/>
    <property type="project" value="Ensembl"/>
</dbReference>
<dbReference type="GO" id="GO:0043083">
    <property type="term" value="C:synaptic cleft"/>
    <property type="evidence" value="ECO:0007669"/>
    <property type="project" value="Ensembl"/>
</dbReference>
<dbReference type="GO" id="GO:0042802">
    <property type="term" value="F:identical protein binding"/>
    <property type="evidence" value="ECO:0007669"/>
    <property type="project" value="Ensembl"/>
</dbReference>
<dbReference type="GO" id="GO:0099645">
    <property type="term" value="P:neurotransmitter receptor localization to postsynaptic specialization membrane"/>
    <property type="evidence" value="ECO:0007669"/>
    <property type="project" value="Ensembl"/>
</dbReference>
<dbReference type="GO" id="GO:0097107">
    <property type="term" value="P:postsynaptic density assembly"/>
    <property type="evidence" value="ECO:0007669"/>
    <property type="project" value="Ensembl"/>
</dbReference>
<dbReference type="GO" id="GO:0050807">
    <property type="term" value="P:regulation of synapse organization"/>
    <property type="evidence" value="ECO:0007669"/>
    <property type="project" value="Ensembl"/>
</dbReference>
<dbReference type="FunFam" id="2.60.120.40:FF:000001">
    <property type="entry name" value="Complement C1q B chain"/>
    <property type="match status" value="1"/>
</dbReference>
<dbReference type="Gene3D" id="2.60.120.40">
    <property type="match status" value="1"/>
</dbReference>
<dbReference type="InterPro" id="IPR001073">
    <property type="entry name" value="C1q_dom"/>
</dbReference>
<dbReference type="InterPro" id="IPR050822">
    <property type="entry name" value="Cerebellin_Synaptic_Org"/>
</dbReference>
<dbReference type="InterPro" id="IPR008160">
    <property type="entry name" value="Collagen"/>
</dbReference>
<dbReference type="InterPro" id="IPR008983">
    <property type="entry name" value="Tumour_necrosis_fac-like_dom"/>
</dbReference>
<dbReference type="PANTHER" id="PTHR22923">
    <property type="entry name" value="CEREBELLIN-RELATED"/>
    <property type="match status" value="1"/>
</dbReference>
<dbReference type="PANTHER" id="PTHR22923:SF96">
    <property type="entry name" value="COMPLEMENT C1Q-LIKE PROTEIN 3"/>
    <property type="match status" value="1"/>
</dbReference>
<dbReference type="Pfam" id="PF00386">
    <property type="entry name" value="C1q"/>
    <property type="match status" value="1"/>
</dbReference>
<dbReference type="Pfam" id="PF01391">
    <property type="entry name" value="Collagen"/>
    <property type="match status" value="1"/>
</dbReference>
<dbReference type="PRINTS" id="PR00007">
    <property type="entry name" value="COMPLEMNTC1Q"/>
</dbReference>
<dbReference type="SMART" id="SM00110">
    <property type="entry name" value="C1Q"/>
    <property type="match status" value="1"/>
</dbReference>
<dbReference type="SUPFAM" id="SSF49842">
    <property type="entry name" value="TNF-like"/>
    <property type="match status" value="1"/>
</dbReference>
<dbReference type="PROSITE" id="PS50871">
    <property type="entry name" value="C1Q"/>
    <property type="match status" value="1"/>
</dbReference>
<accession>Q5VWW1</accession>
<accession>A0PJY4</accession>
<accession>A0PJY5</accession>
<feature type="signal peptide" evidence="2">
    <location>
        <begin position="1"/>
        <end position="20"/>
    </location>
</feature>
<feature type="chain" id="PRO_0000274337" description="Complement C1q-like protein 3">
    <location>
        <begin position="21"/>
        <end position="255"/>
    </location>
</feature>
<feature type="domain" description="Collagen-like">
    <location>
        <begin position="61"/>
        <end position="111"/>
    </location>
</feature>
<feature type="domain" description="C1q" evidence="3">
    <location>
        <begin position="122"/>
        <end position="255"/>
    </location>
</feature>
<feature type="region of interest" description="Disordered" evidence="4">
    <location>
        <begin position="39"/>
        <end position="109"/>
    </location>
</feature>
<feature type="compositionally biased region" description="Pro residues" evidence="4">
    <location>
        <begin position="75"/>
        <end position="89"/>
    </location>
</feature>
<feature type="splice variant" id="VSP_027130" description="In isoform 2 and isoform 3." evidence="6">
    <location>
        <begin position="63"/>
        <end position="86"/>
    </location>
</feature>
<feature type="splice variant" id="VSP_027131" description="In isoform 3." evidence="6">
    <location>
        <begin position="87"/>
        <end position="104"/>
    </location>
</feature>
<name>C1QL3_HUMAN</name>